<keyword id="KW-0413">Isomerase</keyword>
<keyword id="KW-0460">Magnesium</keyword>
<keyword id="KW-0479">Metal-binding</keyword>
<keyword id="KW-0597">Phosphoprotein</keyword>
<keyword id="KW-1185">Reference proteome</keyword>
<reference key="1">
    <citation type="submission" date="2008-01" db="EMBL/GenBank/DDBJ databases">
        <title>Complete sequence of Thermoanaerobacter pseudethanolicus 39E.</title>
        <authorList>
            <person name="Copeland A."/>
            <person name="Lucas S."/>
            <person name="Lapidus A."/>
            <person name="Barry K."/>
            <person name="Glavina del Rio T."/>
            <person name="Dalin E."/>
            <person name="Tice H."/>
            <person name="Pitluck S."/>
            <person name="Bruce D."/>
            <person name="Goodwin L."/>
            <person name="Saunders E."/>
            <person name="Brettin T."/>
            <person name="Detter J.C."/>
            <person name="Han C."/>
            <person name="Schmutz J."/>
            <person name="Larimer F."/>
            <person name="Land M."/>
            <person name="Hauser L."/>
            <person name="Kyrpides N."/>
            <person name="Lykidis A."/>
            <person name="Hemme C."/>
            <person name="Fields M.W."/>
            <person name="He Z."/>
            <person name="Zhou J."/>
            <person name="Richardson P."/>
        </authorList>
    </citation>
    <scope>NUCLEOTIDE SEQUENCE [LARGE SCALE GENOMIC DNA]</scope>
    <source>
        <strain>ATCC 33223 / DSM 2355 / 39E</strain>
    </source>
</reference>
<name>GLMM_THEP3</name>
<sequence>MARLFGTDGVRGIANYDLTPQLAFELGRAGAYVLTHGTHRPKVVVGKDSRISGDMLECALTAGLTSVGAEVISVGIIPTPAVAYLTRLYQADAGVMISASHNPVEYNGIKFFDKDGYKLPDEVEDRIENIIKEKIELPSPIGTGIGTRKEYTNSHRDYIEFLKSTIDGDLKEMKIVIDCAYGASSTIAPILFKELGAEVILHGAEPIGEKINVNCGSTHPEKLQQLVIENGADIGLAFDGDADRLIAVDEKGNVVDGDHIMAICAIDLKKKGRLKNNTVVATVMSNIGFEIALKEQGINLIRTKVGDRYVLEEMTKGGYSIGGEQSGHIIFLDDNTTGDGEITALKLCSISKESGKKLSELAACMITYPQVLINAKVKNELKNAYLEDEEIKREIENLEREMRGEGRVLIRPSGTEPLVRVMVEGKDYDKISQMAKELAELIERKLN</sequence>
<feature type="chain" id="PRO_1000201150" description="Phosphoglucosamine mutase">
    <location>
        <begin position="1"/>
        <end position="447"/>
    </location>
</feature>
<feature type="active site" description="Phosphoserine intermediate" evidence="1">
    <location>
        <position position="100"/>
    </location>
</feature>
<feature type="binding site" description="via phosphate group" evidence="1">
    <location>
        <position position="100"/>
    </location>
    <ligand>
        <name>Mg(2+)</name>
        <dbReference type="ChEBI" id="CHEBI:18420"/>
    </ligand>
</feature>
<feature type="binding site" evidence="1">
    <location>
        <position position="239"/>
    </location>
    <ligand>
        <name>Mg(2+)</name>
        <dbReference type="ChEBI" id="CHEBI:18420"/>
    </ligand>
</feature>
<feature type="binding site" evidence="1">
    <location>
        <position position="241"/>
    </location>
    <ligand>
        <name>Mg(2+)</name>
        <dbReference type="ChEBI" id="CHEBI:18420"/>
    </ligand>
</feature>
<feature type="binding site" evidence="1">
    <location>
        <position position="243"/>
    </location>
    <ligand>
        <name>Mg(2+)</name>
        <dbReference type="ChEBI" id="CHEBI:18420"/>
    </ligand>
</feature>
<feature type="modified residue" description="Phosphoserine" evidence="1">
    <location>
        <position position="100"/>
    </location>
</feature>
<comment type="function">
    <text evidence="1">Catalyzes the conversion of glucosamine-6-phosphate to glucosamine-1-phosphate.</text>
</comment>
<comment type="catalytic activity">
    <reaction evidence="1">
        <text>alpha-D-glucosamine 1-phosphate = D-glucosamine 6-phosphate</text>
        <dbReference type="Rhea" id="RHEA:23424"/>
        <dbReference type="ChEBI" id="CHEBI:58516"/>
        <dbReference type="ChEBI" id="CHEBI:58725"/>
        <dbReference type="EC" id="5.4.2.10"/>
    </reaction>
</comment>
<comment type="cofactor">
    <cofactor evidence="1">
        <name>Mg(2+)</name>
        <dbReference type="ChEBI" id="CHEBI:18420"/>
    </cofactor>
    <text evidence="1">Binds 1 Mg(2+) ion per subunit.</text>
</comment>
<comment type="PTM">
    <text evidence="1">Activated by phosphorylation.</text>
</comment>
<comment type="similarity">
    <text evidence="1">Belongs to the phosphohexose mutase family.</text>
</comment>
<protein>
    <recommendedName>
        <fullName evidence="1">Phosphoglucosamine mutase</fullName>
        <ecNumber evidence="1">5.4.2.10</ecNumber>
    </recommendedName>
</protein>
<accession>B0KD39</accession>
<organism>
    <name type="scientific">Thermoanaerobacter pseudethanolicus (strain ATCC 33223 / 39E)</name>
    <name type="common">Clostridium thermohydrosulfuricum</name>
    <dbReference type="NCBI Taxonomy" id="340099"/>
    <lineage>
        <taxon>Bacteria</taxon>
        <taxon>Bacillati</taxon>
        <taxon>Bacillota</taxon>
        <taxon>Clostridia</taxon>
        <taxon>Thermoanaerobacterales</taxon>
        <taxon>Thermoanaerobacteraceae</taxon>
        <taxon>Thermoanaerobacter</taxon>
    </lineage>
</organism>
<gene>
    <name evidence="1" type="primary">glmM</name>
    <name type="ordered locus">Teth39_0471</name>
</gene>
<evidence type="ECO:0000255" key="1">
    <source>
        <dbReference type="HAMAP-Rule" id="MF_01554"/>
    </source>
</evidence>
<dbReference type="EC" id="5.4.2.10" evidence="1"/>
<dbReference type="EMBL" id="CP000924">
    <property type="protein sequence ID" value="ABY94137.1"/>
    <property type="molecule type" value="Genomic_DNA"/>
</dbReference>
<dbReference type="RefSeq" id="WP_012269021.1">
    <property type="nucleotide sequence ID" value="NC_010321.1"/>
</dbReference>
<dbReference type="SMR" id="B0KD39"/>
<dbReference type="STRING" id="340099.Teth39_0471"/>
<dbReference type="KEGG" id="tpd:Teth39_0471"/>
<dbReference type="eggNOG" id="COG1109">
    <property type="taxonomic scope" value="Bacteria"/>
</dbReference>
<dbReference type="HOGENOM" id="CLU_016950_7_0_9"/>
<dbReference type="Proteomes" id="UP000002156">
    <property type="component" value="Chromosome"/>
</dbReference>
<dbReference type="GO" id="GO:0005829">
    <property type="term" value="C:cytosol"/>
    <property type="evidence" value="ECO:0007669"/>
    <property type="project" value="TreeGrafter"/>
</dbReference>
<dbReference type="GO" id="GO:0000287">
    <property type="term" value="F:magnesium ion binding"/>
    <property type="evidence" value="ECO:0007669"/>
    <property type="project" value="UniProtKB-UniRule"/>
</dbReference>
<dbReference type="GO" id="GO:0008966">
    <property type="term" value="F:phosphoglucosamine mutase activity"/>
    <property type="evidence" value="ECO:0007669"/>
    <property type="project" value="UniProtKB-UniRule"/>
</dbReference>
<dbReference type="GO" id="GO:0004615">
    <property type="term" value="F:phosphomannomutase activity"/>
    <property type="evidence" value="ECO:0007669"/>
    <property type="project" value="TreeGrafter"/>
</dbReference>
<dbReference type="GO" id="GO:0005975">
    <property type="term" value="P:carbohydrate metabolic process"/>
    <property type="evidence" value="ECO:0007669"/>
    <property type="project" value="InterPro"/>
</dbReference>
<dbReference type="GO" id="GO:0009252">
    <property type="term" value="P:peptidoglycan biosynthetic process"/>
    <property type="evidence" value="ECO:0007669"/>
    <property type="project" value="TreeGrafter"/>
</dbReference>
<dbReference type="GO" id="GO:0006048">
    <property type="term" value="P:UDP-N-acetylglucosamine biosynthetic process"/>
    <property type="evidence" value="ECO:0007669"/>
    <property type="project" value="TreeGrafter"/>
</dbReference>
<dbReference type="CDD" id="cd05802">
    <property type="entry name" value="GlmM"/>
    <property type="match status" value="1"/>
</dbReference>
<dbReference type="FunFam" id="3.30.310.50:FF:000001">
    <property type="entry name" value="Phosphoglucosamine mutase"/>
    <property type="match status" value="1"/>
</dbReference>
<dbReference type="FunFam" id="3.40.120.10:FF:000001">
    <property type="entry name" value="Phosphoglucosamine mutase"/>
    <property type="match status" value="1"/>
</dbReference>
<dbReference type="FunFam" id="3.40.120.10:FF:000002">
    <property type="entry name" value="Phosphoglucosamine mutase"/>
    <property type="match status" value="1"/>
</dbReference>
<dbReference type="Gene3D" id="3.40.120.10">
    <property type="entry name" value="Alpha-D-Glucose-1,6-Bisphosphate, subunit A, domain 3"/>
    <property type="match status" value="3"/>
</dbReference>
<dbReference type="Gene3D" id="3.30.310.50">
    <property type="entry name" value="Alpha-D-phosphohexomutase, C-terminal domain"/>
    <property type="match status" value="1"/>
</dbReference>
<dbReference type="HAMAP" id="MF_01554_B">
    <property type="entry name" value="GlmM_B"/>
    <property type="match status" value="1"/>
</dbReference>
<dbReference type="InterPro" id="IPR005844">
    <property type="entry name" value="A-D-PHexomutase_a/b/a-I"/>
</dbReference>
<dbReference type="InterPro" id="IPR016055">
    <property type="entry name" value="A-D-PHexomutase_a/b/a-I/II/III"/>
</dbReference>
<dbReference type="InterPro" id="IPR005845">
    <property type="entry name" value="A-D-PHexomutase_a/b/a-II"/>
</dbReference>
<dbReference type="InterPro" id="IPR005846">
    <property type="entry name" value="A-D-PHexomutase_a/b/a-III"/>
</dbReference>
<dbReference type="InterPro" id="IPR005843">
    <property type="entry name" value="A-D-PHexomutase_C"/>
</dbReference>
<dbReference type="InterPro" id="IPR036900">
    <property type="entry name" value="A-D-PHexomutase_C_sf"/>
</dbReference>
<dbReference type="InterPro" id="IPR016066">
    <property type="entry name" value="A-D-PHexomutase_CS"/>
</dbReference>
<dbReference type="InterPro" id="IPR005841">
    <property type="entry name" value="Alpha-D-phosphohexomutase_SF"/>
</dbReference>
<dbReference type="InterPro" id="IPR006352">
    <property type="entry name" value="GlmM_bact"/>
</dbReference>
<dbReference type="InterPro" id="IPR050060">
    <property type="entry name" value="Phosphoglucosamine_mutase"/>
</dbReference>
<dbReference type="NCBIfam" id="TIGR01455">
    <property type="entry name" value="glmM"/>
    <property type="match status" value="1"/>
</dbReference>
<dbReference type="NCBIfam" id="NF008139">
    <property type="entry name" value="PRK10887.1"/>
    <property type="match status" value="1"/>
</dbReference>
<dbReference type="PANTHER" id="PTHR42946:SF1">
    <property type="entry name" value="PHOSPHOGLUCOMUTASE (ALPHA-D-GLUCOSE-1,6-BISPHOSPHATE-DEPENDENT)"/>
    <property type="match status" value="1"/>
</dbReference>
<dbReference type="PANTHER" id="PTHR42946">
    <property type="entry name" value="PHOSPHOHEXOSE MUTASE"/>
    <property type="match status" value="1"/>
</dbReference>
<dbReference type="Pfam" id="PF02878">
    <property type="entry name" value="PGM_PMM_I"/>
    <property type="match status" value="1"/>
</dbReference>
<dbReference type="Pfam" id="PF02879">
    <property type="entry name" value="PGM_PMM_II"/>
    <property type="match status" value="1"/>
</dbReference>
<dbReference type="Pfam" id="PF02880">
    <property type="entry name" value="PGM_PMM_III"/>
    <property type="match status" value="1"/>
</dbReference>
<dbReference type="Pfam" id="PF00408">
    <property type="entry name" value="PGM_PMM_IV"/>
    <property type="match status" value="1"/>
</dbReference>
<dbReference type="PRINTS" id="PR00509">
    <property type="entry name" value="PGMPMM"/>
</dbReference>
<dbReference type="SUPFAM" id="SSF55957">
    <property type="entry name" value="Phosphoglucomutase, C-terminal domain"/>
    <property type="match status" value="1"/>
</dbReference>
<dbReference type="SUPFAM" id="SSF53738">
    <property type="entry name" value="Phosphoglucomutase, first 3 domains"/>
    <property type="match status" value="3"/>
</dbReference>
<dbReference type="PROSITE" id="PS00710">
    <property type="entry name" value="PGM_PMM"/>
    <property type="match status" value="1"/>
</dbReference>
<proteinExistence type="inferred from homology"/>